<name>MCRD_METTM</name>
<feature type="chain" id="PRO_0000147497" description="Methyl-coenzyme M reductase I operon protein D">
    <location>
        <begin position="1"/>
        <end position="145"/>
    </location>
</feature>
<feature type="sequence conflict" description="In Ref. 1; CAA30636." evidence="1" ref="1">
    <original>DEIPDELIGLTDQNARLSERATIIKRKKEH</original>
    <variation>MRFLMNSSVSRIRTPGSVKGPQ</variation>
    <location>
        <begin position="116"/>
        <end position="145"/>
    </location>
</feature>
<evidence type="ECO:0000305" key="1"/>
<proteinExistence type="evidence at transcript level"/>
<keyword id="KW-0484">Methanogenesis</keyword>
<sequence>MDVQIFPHRLLGADTTEKLLNRLEDIHGVKRMVIHGQRLPPEDHPDRRIINVKGQEFELQVKTGRVLLEVEDEETITDIKRVCEDLLPFGYDVTPGKYIRTEKTVTDEIKYGESLDEIPDELIGLTDQNARLSERATIIKRKKEH</sequence>
<reference key="1">
    <citation type="journal article" date="1988" name="J. Bacteriol.">
        <title>Cloning and characterization of the methyl coenzyme M reductase genes from Methanobacterium thermoautotrophicum.</title>
        <authorList>
            <person name="Bokranz M."/>
            <person name="Baeumner G."/>
            <person name="Allmansberger R."/>
            <person name="Ankel-Fuchs D."/>
            <person name="Klein A."/>
        </authorList>
    </citation>
    <scope>NUCLEOTIDE SEQUENCE [GENOMIC DNA]</scope>
    <source>
        <strain>ATCC BAA-927 / DSM 2133 / JCM 14651 / NBRC 100331 / OCM 82 / Marburg</strain>
    </source>
</reference>
<reference key="2">
    <citation type="journal article" date="2010" name="J. Bacteriol.">
        <title>Complete genome sequence of Methanothermobacter marburgensis, a methanoarchaeon model organism.</title>
        <authorList>
            <person name="Liesegang H."/>
            <person name="Kaster A.K."/>
            <person name="Wiezer A."/>
            <person name="Goenrich M."/>
            <person name="Wollherr A."/>
            <person name="Seedorf H."/>
            <person name="Gottschalk G."/>
            <person name="Thauer R.K."/>
        </authorList>
    </citation>
    <scope>NUCLEOTIDE SEQUENCE [LARGE SCALE GENOMIC DNA]</scope>
    <source>
        <strain>ATCC BAA-927 / DSM 2133 / JCM 14651 / NBRC 100331 / OCM 82 / Marburg</strain>
    </source>
</reference>
<gene>
    <name type="primary">mcrD</name>
    <name type="ordered locus">MTBMA_c15510</name>
</gene>
<comment type="subunit">
    <text>MCR is composed of three subunits: alpha, beta, and gamma. The function of proteins C and D is not known.</text>
</comment>
<comment type="developmental stage">
    <text>There are two MCR complexes in this bacteria. MCR II is expressed in the early growth phase. Late growth cells contains mostly MCR I.</text>
</comment>
<dbReference type="EMBL" id="X07794">
    <property type="protein sequence ID" value="CAA30636.1"/>
    <property type="molecule type" value="Genomic_DNA"/>
</dbReference>
<dbReference type="EMBL" id="CP001710">
    <property type="protein sequence ID" value="ADL59130.1"/>
    <property type="molecule type" value="Genomic_DNA"/>
</dbReference>
<dbReference type="RefSeq" id="WP_013296340.1">
    <property type="nucleotide sequence ID" value="NC_014408.1"/>
</dbReference>
<dbReference type="SMR" id="P11564"/>
<dbReference type="STRING" id="79929.MTBMA_c15510"/>
<dbReference type="PaxDb" id="79929-MTBMA_c15510"/>
<dbReference type="GeneID" id="77400322"/>
<dbReference type="GeneID" id="9705260"/>
<dbReference type="KEGG" id="mmg:MTBMA_c15510"/>
<dbReference type="PATRIC" id="fig|79929.8.peg.1504"/>
<dbReference type="HOGENOM" id="CLU_118415_0_0_2"/>
<dbReference type="OrthoDB" id="109281at2157"/>
<dbReference type="Proteomes" id="UP000000345">
    <property type="component" value="Chromosome"/>
</dbReference>
<dbReference type="GO" id="GO:0015948">
    <property type="term" value="P:methanogenesis"/>
    <property type="evidence" value="ECO:0007669"/>
    <property type="project" value="UniProtKB-KW"/>
</dbReference>
<dbReference type="InterPro" id="IPR003901">
    <property type="entry name" value="Me_CoM_Rdtase_D"/>
</dbReference>
<dbReference type="NCBIfam" id="TIGR03260">
    <property type="entry name" value="met_CoM_red_D"/>
    <property type="match status" value="1"/>
</dbReference>
<dbReference type="Pfam" id="PF02505">
    <property type="entry name" value="MCR_D"/>
    <property type="match status" value="1"/>
</dbReference>
<dbReference type="PIRSF" id="PIRSF005636">
    <property type="entry name" value="McrD"/>
    <property type="match status" value="1"/>
</dbReference>
<organism>
    <name type="scientific">Methanothermobacter marburgensis (strain ATCC BAA-927 / DSM 2133 / JCM 14651 / NBRC 100331 / OCM 82 / Marburg)</name>
    <name type="common">Methanobacterium thermoautotrophicum</name>
    <dbReference type="NCBI Taxonomy" id="79929"/>
    <lineage>
        <taxon>Archaea</taxon>
        <taxon>Methanobacteriati</taxon>
        <taxon>Methanobacteriota</taxon>
        <taxon>Methanomada group</taxon>
        <taxon>Methanobacteria</taxon>
        <taxon>Methanobacteriales</taxon>
        <taxon>Methanobacteriaceae</taxon>
        <taxon>Methanothermobacter</taxon>
    </lineage>
</organism>
<protein>
    <recommendedName>
        <fullName>Methyl-coenzyme M reductase I operon protein D</fullName>
    </recommendedName>
</protein>
<accession>P11564</accession>
<accession>D9PY32</accession>